<gene>
    <name type="primary">LYSET</name>
    <name type="synonym">C14orf109</name>
    <name type="synonym">TMEM251</name>
    <name type="ORF">RCJMB04_5b13</name>
</gene>
<protein>
    <recommendedName>
        <fullName>Lysosomal enzyme trafficking factor</fullName>
    </recommendedName>
    <alternativeName>
        <fullName>Transmembrane protein 251</fullName>
    </alternativeName>
</protein>
<accession>Q5ZLR7</accession>
<organism>
    <name type="scientific">Gallus gallus</name>
    <name type="common">Chicken</name>
    <dbReference type="NCBI Taxonomy" id="9031"/>
    <lineage>
        <taxon>Eukaryota</taxon>
        <taxon>Metazoa</taxon>
        <taxon>Chordata</taxon>
        <taxon>Craniata</taxon>
        <taxon>Vertebrata</taxon>
        <taxon>Euteleostomi</taxon>
        <taxon>Archelosauria</taxon>
        <taxon>Archosauria</taxon>
        <taxon>Dinosauria</taxon>
        <taxon>Saurischia</taxon>
        <taxon>Theropoda</taxon>
        <taxon>Coelurosauria</taxon>
        <taxon>Aves</taxon>
        <taxon>Neognathae</taxon>
        <taxon>Galloanserae</taxon>
        <taxon>Galliformes</taxon>
        <taxon>Phasianidae</taxon>
        <taxon>Phasianinae</taxon>
        <taxon>Gallus</taxon>
    </lineage>
</organism>
<reference key="1">
    <citation type="journal article" date="2005" name="Genome Biol.">
        <title>Full-length cDNAs from chicken bursal lymphocytes to facilitate gene function analysis.</title>
        <authorList>
            <person name="Caldwell R.B."/>
            <person name="Kierzek A.M."/>
            <person name="Arakawa H."/>
            <person name="Bezzubov Y."/>
            <person name="Zaim J."/>
            <person name="Fiedler P."/>
            <person name="Kutter S."/>
            <person name="Blagodatski A."/>
            <person name="Kostovska D."/>
            <person name="Koter M."/>
            <person name="Plachy J."/>
            <person name="Carninci P."/>
            <person name="Hayashizaki Y."/>
            <person name="Buerstedde J.-M."/>
        </authorList>
    </citation>
    <scope>NUCLEOTIDE SEQUENCE [LARGE SCALE MRNA]</scope>
    <source>
        <strain>CB</strain>
        <tissue>Bursa of Fabricius</tissue>
    </source>
</reference>
<comment type="function">
    <text evidence="1">Required for mannose-6-phosphate-dependent trafficking of lysosomal enzymes. LYSET bridges GlcNAc-1-phosphate transferase (GNPTAB), to the membrane-bound transcription factor site-1 protease (MBTPS1), thus allowing proteolytic activation of the GNPTAB. GNPTAB is involved in the regulation of M6P-dependent Golgi-to-lysosome trafficking of lysosomal enzymes. LYSET is thus an essential factor for maturation and delivery of lysosomal hydrolases.</text>
</comment>
<comment type="subcellular location">
    <subcellularLocation>
        <location evidence="1">Golgi apparatus membrane</location>
        <topology evidence="2">Multi-pass membrane protein</topology>
    </subcellularLocation>
</comment>
<comment type="similarity">
    <text evidence="3">Belongs to the LYSET family.</text>
</comment>
<comment type="sequence caution" evidence="3">
    <conflict type="erroneous initiation">
        <sequence resource="EMBL-CDS" id="CAG31326"/>
    </conflict>
    <text>Truncated N-terminus.</text>
</comment>
<proteinExistence type="evidence at transcript level"/>
<feature type="chain" id="PRO_0000089915" description="Lysosomal enzyme trafficking factor">
    <location>
        <begin position="1"/>
        <end position="131"/>
    </location>
</feature>
<feature type="transmembrane region" description="Helical" evidence="2">
    <location>
        <begin position="8"/>
        <end position="28"/>
    </location>
</feature>
<feature type="transmembrane region" description="Helical" evidence="2">
    <location>
        <begin position="66"/>
        <end position="86"/>
    </location>
</feature>
<evidence type="ECO:0000250" key="1">
    <source>
        <dbReference type="UniProtKB" id="Q8N6I4"/>
    </source>
</evidence>
<evidence type="ECO:0000255" key="2"/>
<evidence type="ECO:0000305" key="3"/>
<sequence length="131" mass="15363">MMNFRQRMGWIGVGLYLLASAAAFYYVFEINETYNKLALEHIQQHPQEPQEGTTWTHSLKVRLLSLPFWLWTIIFLIPYLQMFLFLYSCTRADPKTVGYCIIPICLAVICNRHQTFVKASNQISRLQLIDT</sequence>
<keyword id="KW-0333">Golgi apparatus</keyword>
<keyword id="KW-0472">Membrane</keyword>
<keyword id="KW-1185">Reference proteome</keyword>
<keyword id="KW-0812">Transmembrane</keyword>
<keyword id="KW-1133">Transmembrane helix</keyword>
<dbReference type="EMBL" id="AJ719667">
    <property type="protein sequence ID" value="CAG31326.1"/>
    <property type="status" value="ALT_INIT"/>
    <property type="molecule type" value="mRNA"/>
</dbReference>
<dbReference type="RefSeq" id="NP_001073200.1">
    <property type="nucleotide sequence ID" value="NM_001079732.1"/>
</dbReference>
<dbReference type="FunCoup" id="Q5ZLR7">
    <property type="interactions" value="319"/>
</dbReference>
<dbReference type="STRING" id="9031.ENSGALP00000066120"/>
<dbReference type="PaxDb" id="9031-ENSGALP00000028021"/>
<dbReference type="Ensembl" id="ENSGALT00000122317">
    <property type="protein sequence ID" value="ENSGALP00000092807"/>
    <property type="gene ID" value="ENSGALG00000065192"/>
</dbReference>
<dbReference type="Ensembl" id="ENSGALT00000136323">
    <property type="protein sequence ID" value="ENSGALP00000086802"/>
    <property type="gene ID" value="ENSGALG00000065192"/>
</dbReference>
<dbReference type="Ensembl" id="ENSGALT00000143755">
    <property type="protein sequence ID" value="ENSGALP00000085652"/>
    <property type="gene ID" value="ENSGALG00000065192"/>
</dbReference>
<dbReference type="Ensembl" id="ENSGALT00010040734.1">
    <property type="protein sequence ID" value="ENSGALP00010023699.1"/>
    <property type="gene ID" value="ENSGALG00010016883.1"/>
</dbReference>
<dbReference type="Ensembl" id="ENSGALT00010040739.1">
    <property type="protein sequence ID" value="ENSGALP00010023704.1"/>
    <property type="gene ID" value="ENSGALG00010016883.1"/>
</dbReference>
<dbReference type="Ensembl" id="ENSGALT00010040742.1">
    <property type="protein sequence ID" value="ENSGALP00010023707.1"/>
    <property type="gene ID" value="ENSGALG00010016883.1"/>
</dbReference>
<dbReference type="GeneID" id="423422"/>
<dbReference type="KEGG" id="gga:423422"/>
<dbReference type="CTD" id="619265"/>
<dbReference type="VEuPathDB" id="HostDB:geneid_423422"/>
<dbReference type="eggNOG" id="ENOG502RY2J">
    <property type="taxonomic scope" value="Eukaryota"/>
</dbReference>
<dbReference type="GeneTree" id="ENSGT00390000007473"/>
<dbReference type="HOGENOM" id="CLU_133007_0_0_1"/>
<dbReference type="InParanoid" id="Q5ZLR7"/>
<dbReference type="OMA" id="AYYIFEV"/>
<dbReference type="OrthoDB" id="6273523at2759"/>
<dbReference type="PhylomeDB" id="Q5ZLR7"/>
<dbReference type="TreeFam" id="TF332722"/>
<dbReference type="PRO" id="PR:Q5ZLR7"/>
<dbReference type="Proteomes" id="UP000000539">
    <property type="component" value="Chromosome 5"/>
</dbReference>
<dbReference type="Bgee" id="ENSGALG00000051040">
    <property type="expression patterns" value="Expressed in granulocyte and 14 other cell types or tissues"/>
</dbReference>
<dbReference type="GO" id="GO:0005794">
    <property type="term" value="C:Golgi apparatus"/>
    <property type="evidence" value="ECO:0000250"/>
    <property type="project" value="UniProtKB"/>
</dbReference>
<dbReference type="GO" id="GO:0000139">
    <property type="term" value="C:Golgi membrane"/>
    <property type="evidence" value="ECO:0007669"/>
    <property type="project" value="UniProtKB-SubCell"/>
</dbReference>
<dbReference type="GO" id="GO:0007040">
    <property type="term" value="P:lysosome organization"/>
    <property type="evidence" value="ECO:0000250"/>
    <property type="project" value="UniProtKB"/>
</dbReference>
<dbReference type="GO" id="GO:0060627">
    <property type="term" value="P:regulation of vesicle-mediated transport"/>
    <property type="evidence" value="ECO:0000250"/>
    <property type="project" value="UniProtKB"/>
</dbReference>
<dbReference type="InterPro" id="IPR028024">
    <property type="entry name" value="LYSET"/>
</dbReference>
<dbReference type="PANTHER" id="PTHR31925:SF1">
    <property type="entry name" value="LYSOSOMAL ENZYME TRAFFICKING FACTOR"/>
    <property type="match status" value="1"/>
</dbReference>
<dbReference type="PANTHER" id="PTHR31925">
    <property type="entry name" value="TRANSMEMBRANE PROTEIN 251"/>
    <property type="match status" value="1"/>
</dbReference>
<dbReference type="Pfam" id="PF15190">
    <property type="entry name" value="TMEM251"/>
    <property type="match status" value="1"/>
</dbReference>
<name>LYSET_CHICK</name>